<evidence type="ECO:0000250" key="1"/>
<evidence type="ECO:0000255" key="2"/>
<evidence type="ECO:0000305" key="3"/>
<reference key="1">
    <citation type="journal article" date="1998" name="Science">
        <title>Genome sequence of the nematode C. elegans: a platform for investigating biology.</title>
        <authorList>
            <consortium name="The C. elegans sequencing consortium"/>
        </authorList>
    </citation>
    <scope>NUCLEOTIDE SEQUENCE [LARGE SCALE GENOMIC DNA]</scope>
    <source>
        <strain>Bristol N2</strain>
    </source>
</reference>
<organism>
    <name type="scientific">Caenorhabditis elegans</name>
    <dbReference type="NCBI Taxonomy" id="6239"/>
    <lineage>
        <taxon>Eukaryota</taxon>
        <taxon>Metazoa</taxon>
        <taxon>Ecdysozoa</taxon>
        <taxon>Nematoda</taxon>
        <taxon>Chromadorea</taxon>
        <taxon>Rhabditida</taxon>
        <taxon>Rhabditina</taxon>
        <taxon>Rhabditomorpha</taxon>
        <taxon>Rhabditoidea</taxon>
        <taxon>Rhabditidae</taxon>
        <taxon>Peloderinae</taxon>
        <taxon>Caenorhabditis</taxon>
    </lineage>
</organism>
<sequence length="262" mass="29638">MTFLAILFVIAVLLLLAQLPVIGFYIRAVYFGMCLIIGGFLGGLASIPFGKSPNNHFRMFKIFQAMTWPMGVRFELRNSEILHDKKPYIIIANHQSALDVLGMSFAWPVDCVVMLKSSLKYLPGFNLCAYLCDSVYINRFSKEKALKTVDTTLHEIVTKKRKVWIYPEGTRNAEPELLPFKKGAFILAKQAKIPIVPCVFSSHKFFYSHAEKRLTSGNCIIDILPEVDSSKFDSIDDLSAHCRKIMQAHREKLDAEAANLNI</sequence>
<gene>
    <name type="primary">acl-1</name>
    <name type="ORF">F59F4.4</name>
</gene>
<comment type="function">
    <text evidence="1">Converts lysophosphatidic acid (LPA) into phosphatidic acid by incorporating an acyl moiety at the sn-2 position of the glycerol backbone.</text>
</comment>
<comment type="catalytic activity">
    <reaction>
        <text>a 1-acyl-sn-glycero-3-phosphate + an acyl-CoA = a 1,2-diacyl-sn-glycero-3-phosphate + CoA</text>
        <dbReference type="Rhea" id="RHEA:19709"/>
        <dbReference type="ChEBI" id="CHEBI:57287"/>
        <dbReference type="ChEBI" id="CHEBI:57970"/>
        <dbReference type="ChEBI" id="CHEBI:58342"/>
        <dbReference type="ChEBI" id="CHEBI:58608"/>
        <dbReference type="EC" id="2.3.1.51"/>
    </reaction>
</comment>
<comment type="pathway">
    <text>Phospholipid metabolism; CDP-diacylglycerol biosynthesis; CDP-diacylglycerol from sn-glycerol 3-phosphate: step 2/3.</text>
</comment>
<comment type="subcellular location">
    <subcellularLocation>
        <location evidence="3">Membrane</location>
        <topology evidence="3">Multi-pass membrane protein</topology>
    </subcellularLocation>
</comment>
<comment type="domain">
    <text evidence="1">The HXXXXD motif is essential for acyltransferase activity and may constitute the binding site for the phosphate moiety of the glycerol-3-phosphate.</text>
</comment>
<comment type="similarity">
    <text evidence="3">Belongs to the 1-acyl-sn-glycerol-3-phosphate acyltransferase family.</text>
</comment>
<name>PLC1_CAEEL</name>
<accession>Q93841</accession>
<accession>Q93783</accession>
<proteinExistence type="inferred from homology"/>
<keyword id="KW-0012">Acyltransferase</keyword>
<keyword id="KW-0444">Lipid biosynthesis</keyword>
<keyword id="KW-0443">Lipid metabolism</keyword>
<keyword id="KW-0472">Membrane</keyword>
<keyword id="KW-0594">Phospholipid biosynthesis</keyword>
<keyword id="KW-1208">Phospholipid metabolism</keyword>
<keyword id="KW-1185">Reference proteome</keyword>
<keyword id="KW-0808">Transferase</keyword>
<keyword id="KW-0812">Transmembrane</keyword>
<keyword id="KW-1133">Transmembrane helix</keyword>
<feature type="chain" id="PRO_0000208202" description="Putative 1-acyl-sn-glycerol-3-phosphate acyltransferase acl-1">
    <location>
        <begin position="1"/>
        <end position="262"/>
    </location>
</feature>
<feature type="transmembrane region" description="Helical" evidence="2">
    <location>
        <begin position="3"/>
        <end position="23"/>
    </location>
</feature>
<feature type="transmembrane region" description="Helical" evidence="2">
    <location>
        <begin position="29"/>
        <end position="49"/>
    </location>
</feature>
<feature type="transmembrane region" description="Helical" evidence="2">
    <location>
        <begin position="89"/>
        <end position="109"/>
    </location>
</feature>
<feature type="short sequence motif" description="HXXXXD motif">
    <location>
        <begin position="94"/>
        <end position="99"/>
    </location>
</feature>
<protein>
    <recommendedName>
        <fullName>Putative 1-acyl-sn-glycerol-3-phosphate acyltransferase acl-1</fullName>
        <shortName>1-AGP acyltransferase</shortName>
        <shortName>1-AGPAT</shortName>
        <ecNumber>2.3.1.51</ecNumber>
    </recommendedName>
    <alternativeName>
        <fullName>Lysophosphatidic acid acyltransferase</fullName>
        <shortName>LPAAT</shortName>
    </alternativeName>
</protein>
<dbReference type="EC" id="2.3.1.51"/>
<dbReference type="EMBL" id="Z81095">
    <property type="protein sequence ID" value="CAB03160.1"/>
    <property type="molecule type" value="Genomic_DNA"/>
</dbReference>
<dbReference type="EMBL" id="Z81089">
    <property type="protein sequence ID" value="CAB03160.1"/>
    <property type="status" value="JOINED"/>
    <property type="molecule type" value="Genomic_DNA"/>
</dbReference>
<dbReference type="PIR" id="T22599">
    <property type="entry name" value="T22599"/>
</dbReference>
<dbReference type="RefSeq" id="NP_510606.1">
    <property type="nucleotide sequence ID" value="NM_078205.9"/>
</dbReference>
<dbReference type="SMR" id="Q93841"/>
<dbReference type="BioGRID" id="46561">
    <property type="interactions" value="1"/>
</dbReference>
<dbReference type="FunCoup" id="Q93841">
    <property type="interactions" value="670"/>
</dbReference>
<dbReference type="STRING" id="6239.F59F4.4.1"/>
<dbReference type="PaxDb" id="6239-F59F4.4"/>
<dbReference type="PeptideAtlas" id="Q93841"/>
<dbReference type="EnsemblMetazoa" id="F59F4.4.1">
    <property type="protein sequence ID" value="F59F4.4.1"/>
    <property type="gene ID" value="WBGene00010339"/>
</dbReference>
<dbReference type="GeneID" id="181671"/>
<dbReference type="KEGG" id="cel:CELE_F59F4.4"/>
<dbReference type="UCSC" id="F59F4.4">
    <property type="organism name" value="c. elegans"/>
</dbReference>
<dbReference type="AGR" id="WB:WBGene00010339"/>
<dbReference type="CTD" id="181671"/>
<dbReference type="WormBase" id="F59F4.4">
    <property type="protein sequence ID" value="CE11552"/>
    <property type="gene ID" value="WBGene00010339"/>
    <property type="gene designation" value="acl-1"/>
</dbReference>
<dbReference type="eggNOG" id="KOG2848">
    <property type="taxonomic scope" value="Eukaryota"/>
</dbReference>
<dbReference type="GeneTree" id="ENSGT00390000008726"/>
<dbReference type="HOGENOM" id="CLU_027938_10_2_1"/>
<dbReference type="InParanoid" id="Q93841"/>
<dbReference type="OMA" id="KKSLVWI"/>
<dbReference type="OrthoDB" id="202234at2759"/>
<dbReference type="PhylomeDB" id="Q93841"/>
<dbReference type="Reactome" id="R-CEL-1483166">
    <property type="pathway name" value="Synthesis of PA"/>
</dbReference>
<dbReference type="UniPathway" id="UPA00557">
    <property type="reaction ID" value="UER00613"/>
</dbReference>
<dbReference type="PRO" id="PR:Q93841"/>
<dbReference type="Proteomes" id="UP000001940">
    <property type="component" value="Chromosome X"/>
</dbReference>
<dbReference type="Bgee" id="WBGene00010339">
    <property type="expression patterns" value="Expressed in larva and 4 other cell types or tissues"/>
</dbReference>
<dbReference type="GO" id="GO:0005783">
    <property type="term" value="C:endoplasmic reticulum"/>
    <property type="evidence" value="ECO:0000318"/>
    <property type="project" value="GO_Central"/>
</dbReference>
<dbReference type="GO" id="GO:0016020">
    <property type="term" value="C:membrane"/>
    <property type="evidence" value="ECO:0007669"/>
    <property type="project" value="UniProtKB-SubCell"/>
</dbReference>
<dbReference type="GO" id="GO:0003841">
    <property type="term" value="F:1-acylglycerol-3-phosphate O-acyltransferase activity"/>
    <property type="evidence" value="ECO:0000318"/>
    <property type="project" value="GO_Central"/>
</dbReference>
<dbReference type="GO" id="GO:0016024">
    <property type="term" value="P:CDP-diacylglycerol biosynthetic process"/>
    <property type="evidence" value="ECO:0007669"/>
    <property type="project" value="UniProtKB-UniPathway"/>
</dbReference>
<dbReference type="GO" id="GO:0006654">
    <property type="term" value="P:phosphatidic acid biosynthetic process"/>
    <property type="evidence" value="ECO:0000318"/>
    <property type="project" value="GO_Central"/>
</dbReference>
<dbReference type="CDD" id="cd07989">
    <property type="entry name" value="LPLAT_AGPAT-like"/>
    <property type="match status" value="1"/>
</dbReference>
<dbReference type="InterPro" id="IPR004552">
    <property type="entry name" value="AGP_acyltrans"/>
</dbReference>
<dbReference type="InterPro" id="IPR002123">
    <property type="entry name" value="Plipid/glycerol_acylTrfase"/>
</dbReference>
<dbReference type="NCBIfam" id="TIGR00530">
    <property type="entry name" value="AGP_acyltrn"/>
    <property type="match status" value="1"/>
</dbReference>
<dbReference type="PANTHER" id="PTHR10434">
    <property type="entry name" value="1-ACYL-SN-GLYCEROL-3-PHOSPHATE ACYLTRANSFERASE"/>
    <property type="match status" value="1"/>
</dbReference>
<dbReference type="PANTHER" id="PTHR10434:SF10">
    <property type="entry name" value="1-ACYL-SN-GLYCEROL-3-PHOSPHATE ACYLTRANSFERASE ACL-1-RELATED"/>
    <property type="match status" value="1"/>
</dbReference>
<dbReference type="Pfam" id="PF01553">
    <property type="entry name" value="Acyltransferase"/>
    <property type="match status" value="1"/>
</dbReference>
<dbReference type="SMART" id="SM00563">
    <property type="entry name" value="PlsC"/>
    <property type="match status" value="1"/>
</dbReference>
<dbReference type="SUPFAM" id="SSF69593">
    <property type="entry name" value="Glycerol-3-phosphate (1)-acyltransferase"/>
    <property type="match status" value="1"/>
</dbReference>